<evidence type="ECO:0000255" key="1"/>
<evidence type="ECO:0000255" key="2">
    <source>
        <dbReference type="PROSITE-ProRule" id="PRU00115"/>
    </source>
</evidence>
<evidence type="ECO:0000269" key="3">
    <source>
    </source>
</evidence>
<evidence type="ECO:0000269" key="4">
    <source>
    </source>
</evidence>
<evidence type="ECO:0000269" key="5">
    <source>
    </source>
</evidence>
<evidence type="ECO:0000269" key="6">
    <source>
    </source>
</evidence>
<evidence type="ECO:0000269" key="7">
    <source>
    </source>
</evidence>
<evidence type="ECO:0000269" key="8">
    <source>
    </source>
</evidence>
<evidence type="ECO:0000305" key="9"/>
<evidence type="ECO:0007829" key="10">
    <source>
        <dbReference type="PDB" id="1WA5"/>
    </source>
</evidence>
<evidence type="ECO:0007829" key="11">
    <source>
        <dbReference type="PDB" id="1Z3H"/>
    </source>
</evidence>
<organism>
    <name type="scientific">Saccharomyces cerevisiae (strain ATCC 204508 / S288c)</name>
    <name type="common">Baker's yeast</name>
    <dbReference type="NCBI Taxonomy" id="559292"/>
    <lineage>
        <taxon>Eukaryota</taxon>
        <taxon>Fungi</taxon>
        <taxon>Dikarya</taxon>
        <taxon>Ascomycota</taxon>
        <taxon>Saccharomycotina</taxon>
        <taxon>Saccharomycetes</taxon>
        <taxon>Saccharomycetales</taxon>
        <taxon>Saccharomycetaceae</taxon>
        <taxon>Saccharomyces</taxon>
    </lineage>
</organism>
<sequence>MSDLETVAKFLAESVIASTAKTSERNLRQLETQDGFGLTLLHVIASTNLPLSTRLAGALFFKNFIKRKWVDENGNHLLPANNVELIKKEIVPLMISLPNNLQVQIGEAISSIADSDFPDRWPTLLSDLASRLSNDDMVTNKGVLTVAHSIFKRWRPLFRSDELFLEIKLVLDVFTAPFLNLLKTVDEQITANENNKASLNILFDVLLVLIKLYYDFNCQDIPEFFEDNIQVGMGIFHKYLSYSNPLLEDPDETEHASVLIKVKSSIQELVQLYTTRYEDVFGPMINEFIQITWNLLTSISNQPKYDILVSKSLSFLTAVTRIPKYFEIFNNESAMNNITEQIILPNVTLREEDVELFEDDPIEYIRRDLEGSDTDTRRRACTDFLKELKEKNEVLVTNIFLAHMKGFVDQYMSDPSKNWKFKDLYIYLFTALAINGNITNAGVSSTNNLLNVVDFFTKEIAPDLTSNNIPHIILRVDAIKYIYTFRNQLTKAQLIELMPILATFLQTDEYVVYTYAAITIEKILTIRESNTSPAFIFHKEDISNSTEILLKNLIALILKHGSSPEKLAENEFLMRSIFRVLQTSEDSIQPLFPQLLAQFIEIVTIMAKNPSNPRFTHYTFESIGAILNYTQRQNLPLLVDSMMPTFLTVFSEDIQEFIPYVFQIIAFVVEQSATIPESIKPLAQPLLAPNVWELKGNIPAVTRLLKSFIKTDSSIFPDLVPVLGIFQRLIASKAYEVHGFDLLEHIMLLIDMNRLRPYIKQIAVLLLQRLQNSKTERYVKKLTVFFGLISNKLGSDFLIHFIDEVQDGLFQQIWGNFIITTLPTIGNLLDRKIALIGVLNMVINGQFFQSKYPTLISSTMNSIIETASSQSIANLKNDYVDLDNLEEISTFGSHFSKLVSISEKPFDPLPEIDVNNGVRLYVAEALNKYNAISGNTFLNTILPQLTQENQVKLNQLLVGN</sequence>
<name>CSE1_YEAST</name>
<protein>
    <recommendedName>
        <fullName>Importin alpha re-exporter</fullName>
    </recommendedName>
    <alternativeName>
        <fullName>Chromosome segregation protein CSE1</fullName>
    </alternativeName>
</protein>
<gene>
    <name type="primary">CSE1</name>
    <name type="ordered locus">YGL238W</name>
    <name type="ORF">HRC135</name>
</gene>
<keyword id="KW-0002">3D-structure</keyword>
<keyword id="KW-0131">Cell cycle</keyword>
<keyword id="KW-0132">Cell division</keyword>
<keyword id="KW-0963">Cytoplasm</keyword>
<keyword id="KW-0498">Mitosis</keyword>
<keyword id="KW-0539">Nucleus</keyword>
<keyword id="KW-0653">Protein transport</keyword>
<keyword id="KW-1185">Reference proteome</keyword>
<keyword id="KW-0677">Repeat</keyword>
<keyword id="KW-0813">Transport</keyword>
<feature type="chain" id="PRO_0000117293" description="Importin alpha re-exporter">
    <location>
        <begin position="1"/>
        <end position="960"/>
    </location>
</feature>
<feature type="repeat" description="HEAT 1">
    <location>
        <begin position="1"/>
        <end position="33"/>
    </location>
</feature>
<feature type="domain" description="Importin N-terminal" evidence="2">
    <location>
        <begin position="23"/>
        <end position="96"/>
    </location>
</feature>
<feature type="repeat" description="HEAT 2">
    <location>
        <begin position="34"/>
        <end position="73"/>
    </location>
</feature>
<feature type="repeat" description="HEAT 3">
    <location>
        <begin position="74"/>
        <end position="120"/>
    </location>
</feature>
<feature type="repeat" description="HEAT 4">
    <location>
        <begin position="121"/>
        <end position="157"/>
    </location>
</feature>
<feature type="repeat" description="HEAT 5">
    <location>
        <begin position="158"/>
        <end position="220"/>
    </location>
</feature>
<feature type="repeat" description="HEAT 6">
    <location>
        <begin position="221"/>
        <end position="278"/>
    </location>
</feature>
<feature type="repeat" description="HEAT 7">
    <location>
        <begin position="279"/>
        <end position="323"/>
    </location>
</feature>
<feature type="repeat" description="HEAT 8">
    <location>
        <begin position="324"/>
        <end position="392"/>
    </location>
</feature>
<feature type="repeat" description="HEAT 9">
    <location>
        <begin position="393"/>
        <end position="445"/>
    </location>
</feature>
<feature type="repeat" description="HEAT 10">
    <location>
        <begin position="446"/>
        <end position="489"/>
    </location>
</feature>
<feature type="repeat" description="HEAT 11">
    <location>
        <begin position="490"/>
        <end position="528"/>
    </location>
</feature>
<feature type="repeat" description="HEAT 12">
    <location>
        <begin position="529"/>
        <end position="586"/>
    </location>
</feature>
<feature type="repeat" description="HEAT 13">
    <location>
        <begin position="587"/>
        <end position="630"/>
    </location>
</feature>
<feature type="repeat" description="HEAT 14">
    <location>
        <begin position="631"/>
        <end position="674"/>
    </location>
</feature>
<feature type="repeat" description="HEAT 15">
    <location>
        <begin position="675"/>
        <end position="716"/>
    </location>
</feature>
<feature type="repeat" description="HEAT 16">
    <location>
        <begin position="717"/>
        <end position="751"/>
    </location>
</feature>
<feature type="repeat" description="HEAT 17">
    <location>
        <begin position="752"/>
        <end position="794"/>
    </location>
</feature>
<feature type="repeat" description="HEAT 18">
    <location>
        <begin position="795"/>
        <end position="826"/>
    </location>
</feature>
<feature type="repeat" description="HEAT 19; with insert">
    <location>
        <begin position="827"/>
        <end position="928"/>
    </location>
</feature>
<feature type="repeat" description="HEAT 20">
    <location>
        <begin position="929"/>
        <end position="960"/>
    </location>
</feature>
<feature type="short sequence motif" description="Nuclear localization signal" evidence="1">
    <location>
        <begin position="366"/>
        <end position="381"/>
    </location>
</feature>
<feature type="sequence conflict" description="In Ref. 1; AAA34531." evidence="9" ref="1">
    <original>Y</original>
    <variation>D</variation>
    <location>
        <position position="515"/>
    </location>
</feature>
<feature type="helix" evidence="10">
    <location>
        <begin position="3"/>
        <end position="13"/>
    </location>
</feature>
<feature type="helix" evidence="10">
    <location>
        <begin position="17"/>
        <end position="19"/>
    </location>
</feature>
<feature type="helix" evidence="10">
    <location>
        <begin position="20"/>
        <end position="30"/>
    </location>
</feature>
<feature type="helix" evidence="10">
    <location>
        <begin position="36"/>
        <end position="45"/>
    </location>
</feature>
<feature type="helix" evidence="10">
    <location>
        <begin position="51"/>
        <end position="68"/>
    </location>
</feature>
<feature type="strand" evidence="11">
    <location>
        <begin position="76"/>
        <end position="78"/>
    </location>
</feature>
<feature type="helix" evidence="10">
    <location>
        <begin position="80"/>
        <end position="96"/>
    </location>
</feature>
<feature type="helix" evidence="10">
    <location>
        <begin position="99"/>
        <end position="116"/>
    </location>
</feature>
<feature type="turn" evidence="10">
    <location>
        <begin position="117"/>
        <end position="120"/>
    </location>
</feature>
<feature type="helix" evidence="10">
    <location>
        <begin position="124"/>
        <end position="129"/>
    </location>
</feature>
<feature type="helix" evidence="10">
    <location>
        <begin position="137"/>
        <end position="151"/>
    </location>
</feature>
<feature type="helix" evidence="10">
    <location>
        <begin position="152"/>
        <end position="154"/>
    </location>
</feature>
<feature type="helix" evidence="10">
    <location>
        <begin position="161"/>
        <end position="191"/>
    </location>
</feature>
<feature type="turn" evidence="10">
    <location>
        <begin position="192"/>
        <end position="194"/>
    </location>
</feature>
<feature type="helix" evidence="10">
    <location>
        <begin position="196"/>
        <end position="215"/>
    </location>
</feature>
<feature type="helix" evidence="10">
    <location>
        <begin position="223"/>
        <end position="227"/>
    </location>
</feature>
<feature type="helix" evidence="10">
    <location>
        <begin position="229"/>
        <end position="241"/>
    </location>
</feature>
<feature type="helix" evidence="10">
    <location>
        <begin position="245"/>
        <end position="247"/>
    </location>
</feature>
<feature type="strand" evidence="11">
    <location>
        <begin position="253"/>
        <end position="255"/>
    </location>
</feature>
<feature type="helix" evidence="10">
    <location>
        <begin position="258"/>
        <end position="276"/>
    </location>
</feature>
<feature type="helix" evidence="10">
    <location>
        <begin position="278"/>
        <end position="297"/>
    </location>
</feature>
<feature type="helix" evidence="10">
    <location>
        <begin position="303"/>
        <end position="305"/>
    </location>
</feature>
<feature type="helix" evidence="10">
    <location>
        <begin position="306"/>
        <end position="320"/>
    </location>
</feature>
<feature type="helix" evidence="10">
    <location>
        <begin position="323"/>
        <end position="326"/>
    </location>
</feature>
<feature type="helix" evidence="10">
    <location>
        <begin position="327"/>
        <end position="329"/>
    </location>
</feature>
<feature type="helix" evidence="10">
    <location>
        <begin position="332"/>
        <end position="341"/>
    </location>
</feature>
<feature type="helix" evidence="10">
    <location>
        <begin position="344"/>
        <end position="347"/>
    </location>
</feature>
<feature type="helix" evidence="10">
    <location>
        <begin position="351"/>
        <end position="359"/>
    </location>
</feature>
<feature type="helix" evidence="10">
    <location>
        <begin position="361"/>
        <end position="370"/>
    </location>
</feature>
<feature type="helix" evidence="10">
    <location>
        <begin position="377"/>
        <end position="391"/>
    </location>
</feature>
<feature type="helix" evidence="10">
    <location>
        <begin position="393"/>
        <end position="413"/>
    </location>
</feature>
<feature type="turn" evidence="10">
    <location>
        <begin position="415"/>
        <end position="417"/>
    </location>
</feature>
<feature type="helix" evidence="10">
    <location>
        <begin position="419"/>
        <end position="433"/>
    </location>
</feature>
<feature type="strand" evidence="10">
    <location>
        <begin position="434"/>
        <end position="436"/>
    </location>
</feature>
<feature type="helix" evidence="10">
    <location>
        <begin position="452"/>
        <end position="459"/>
    </location>
</feature>
<feature type="helix" evidence="10">
    <location>
        <begin position="461"/>
        <end position="465"/>
    </location>
</feature>
<feature type="helix" evidence="10">
    <location>
        <begin position="472"/>
        <end position="484"/>
    </location>
</feature>
<feature type="helix" evidence="10">
    <location>
        <begin position="486"/>
        <end position="488"/>
    </location>
</feature>
<feature type="helix" evidence="10">
    <location>
        <begin position="491"/>
        <end position="504"/>
    </location>
</feature>
<feature type="helix" evidence="10">
    <location>
        <begin position="510"/>
        <end position="523"/>
    </location>
</feature>
<feature type="strand" evidence="10">
    <location>
        <begin position="527"/>
        <end position="529"/>
    </location>
</feature>
<feature type="strand" evidence="10">
    <location>
        <begin position="532"/>
        <end position="537"/>
    </location>
</feature>
<feature type="helix" evidence="10">
    <location>
        <begin position="539"/>
        <end position="541"/>
    </location>
</feature>
<feature type="turn" evidence="10">
    <location>
        <begin position="542"/>
        <end position="545"/>
    </location>
</feature>
<feature type="helix" evidence="10">
    <location>
        <begin position="546"/>
        <end position="557"/>
    </location>
</feature>
<feature type="turn" evidence="10">
    <location>
        <begin position="558"/>
        <end position="560"/>
    </location>
</feature>
<feature type="helix" evidence="10">
    <location>
        <begin position="564"/>
        <end position="567"/>
    </location>
</feature>
<feature type="helix" evidence="10">
    <location>
        <begin position="571"/>
        <end position="584"/>
    </location>
</feature>
<feature type="turn" evidence="10">
    <location>
        <begin position="585"/>
        <end position="588"/>
    </location>
</feature>
<feature type="helix" evidence="10">
    <location>
        <begin position="589"/>
        <end position="591"/>
    </location>
</feature>
<feature type="helix" evidence="10">
    <location>
        <begin position="592"/>
        <end position="606"/>
    </location>
</feature>
<feature type="helix" evidence="10">
    <location>
        <begin position="613"/>
        <end position="628"/>
    </location>
</feature>
<feature type="helix" evidence="10">
    <location>
        <begin position="632"/>
        <end position="634"/>
    </location>
</feature>
<feature type="helix" evidence="10">
    <location>
        <begin position="635"/>
        <end position="651"/>
    </location>
</feature>
<feature type="turn" evidence="10">
    <location>
        <begin position="655"/>
        <end position="657"/>
    </location>
</feature>
<feature type="helix" evidence="10">
    <location>
        <begin position="658"/>
        <end position="671"/>
    </location>
</feature>
<feature type="strand" evidence="11">
    <location>
        <begin position="672"/>
        <end position="674"/>
    </location>
</feature>
<feature type="turn" evidence="10">
    <location>
        <begin position="677"/>
        <end position="679"/>
    </location>
</feature>
<feature type="helix" evidence="10">
    <location>
        <begin position="680"/>
        <end position="682"/>
    </location>
</feature>
<feature type="helix" evidence="10">
    <location>
        <begin position="685"/>
        <end position="687"/>
    </location>
</feature>
<feature type="helix" evidence="10">
    <location>
        <begin position="689"/>
        <end position="692"/>
    </location>
</feature>
<feature type="turn" evidence="10">
    <location>
        <begin position="695"/>
        <end position="697"/>
    </location>
</feature>
<feature type="helix" evidence="10">
    <location>
        <begin position="698"/>
        <end position="712"/>
    </location>
</feature>
<feature type="helix" evidence="10">
    <location>
        <begin position="713"/>
        <end position="715"/>
    </location>
</feature>
<feature type="helix" evidence="10">
    <location>
        <begin position="720"/>
        <end position="730"/>
    </location>
</feature>
<feature type="turn" evidence="10">
    <location>
        <begin position="733"/>
        <end position="735"/>
    </location>
</feature>
<feature type="helix" evidence="10">
    <location>
        <begin position="736"/>
        <end position="749"/>
    </location>
</feature>
<feature type="helix" evidence="10">
    <location>
        <begin position="752"/>
        <end position="755"/>
    </location>
</feature>
<feature type="helix" evidence="10">
    <location>
        <begin position="756"/>
        <end position="758"/>
    </location>
</feature>
<feature type="helix" evidence="10">
    <location>
        <begin position="759"/>
        <end position="772"/>
    </location>
</feature>
<feature type="helix" evidence="10">
    <location>
        <begin position="776"/>
        <end position="792"/>
    </location>
</feature>
<feature type="helix" evidence="10">
    <location>
        <begin position="795"/>
        <end position="803"/>
    </location>
</feature>
<feature type="helix" evidence="10">
    <location>
        <begin position="809"/>
        <end position="816"/>
    </location>
</feature>
<feature type="helix" evidence="10">
    <location>
        <begin position="818"/>
        <end position="821"/>
    </location>
</feature>
<feature type="helix" evidence="10">
    <location>
        <begin position="822"/>
        <end position="824"/>
    </location>
</feature>
<feature type="helix" evidence="10">
    <location>
        <begin position="828"/>
        <end position="843"/>
    </location>
</feature>
<feature type="helix" evidence="10">
    <location>
        <begin position="846"/>
        <end position="851"/>
    </location>
</feature>
<feature type="helix" evidence="10">
    <location>
        <begin position="853"/>
        <end position="855"/>
    </location>
</feature>
<feature type="helix" evidence="10">
    <location>
        <begin position="856"/>
        <end position="868"/>
    </location>
</feature>
<feature type="helix" evidence="11">
    <location>
        <begin position="894"/>
        <end position="896"/>
    </location>
</feature>
<feature type="helix" evidence="10">
    <location>
        <begin position="899"/>
        <end position="901"/>
    </location>
</feature>
<feature type="turn" evidence="10">
    <location>
        <begin position="914"/>
        <end position="916"/>
    </location>
</feature>
<feature type="helix" evidence="10">
    <location>
        <begin position="917"/>
        <end position="932"/>
    </location>
</feature>
<feature type="strand" evidence="11">
    <location>
        <begin position="934"/>
        <end position="936"/>
    </location>
</feature>
<feature type="helix" evidence="10">
    <location>
        <begin position="937"/>
        <end position="941"/>
    </location>
</feature>
<feature type="helix" evidence="10">
    <location>
        <begin position="942"/>
        <end position="944"/>
    </location>
</feature>
<feature type="helix" evidence="10">
    <location>
        <begin position="947"/>
        <end position="957"/>
    </location>
</feature>
<comment type="function">
    <text evidence="3 6 7 8">Export receptor for importin alpha (SRP1). Mediates importin-alpha re-export from the nucleus to the cytoplasm after import substrates have been released into the nucleoplasm.</text>
</comment>
<comment type="subunit">
    <text evidence="5">Binds with high affinity to SRP1 only in the presence of RanGTP. The complex is dissociated by the RanGTP-binding protein YRB1.</text>
</comment>
<comment type="interaction">
    <interactant intactId="EBI-5168">
        <id>P33307</id>
    </interactant>
    <interactant intactId="EBI-1797">
        <id>Q02821</id>
        <label>SRP1</label>
    </interactant>
    <organismsDiffer>false</organismsDiffer>
    <experiments>2</experiments>
</comment>
<comment type="subcellular location">
    <subcellularLocation>
        <location>Cytoplasm</location>
    </subcellularLocation>
    <subcellularLocation>
        <location>Nucleus</location>
    </subcellularLocation>
</comment>
<comment type="miscellaneous">
    <text evidence="4">Present with 23500 molecules/cell in log phase SD medium.</text>
</comment>
<comment type="similarity">
    <text evidence="9">Belongs to the XPO2/CSE1 family.</text>
</comment>
<dbReference type="EMBL" id="L14838">
    <property type="protein sequence ID" value="AAA34531.1"/>
    <property type="molecule type" value="Genomic_DNA"/>
</dbReference>
<dbReference type="EMBL" id="Z72761">
    <property type="protein sequence ID" value="CAA96957.1"/>
    <property type="molecule type" value="Genomic_DNA"/>
</dbReference>
<dbReference type="EMBL" id="Z49149">
    <property type="protein sequence ID" value="CAA89018.1"/>
    <property type="molecule type" value="Genomic_DNA"/>
</dbReference>
<dbReference type="EMBL" id="BK006941">
    <property type="protein sequence ID" value="DAA07880.1"/>
    <property type="molecule type" value="Genomic_DNA"/>
</dbReference>
<dbReference type="PIR" id="A48083">
    <property type="entry name" value="A48083"/>
</dbReference>
<dbReference type="RefSeq" id="NP_011276.1">
    <property type="nucleotide sequence ID" value="NM_001181104.1"/>
</dbReference>
<dbReference type="PDB" id="1WA5">
    <property type="method" value="X-ray"/>
    <property type="resolution" value="2.00 A"/>
    <property type="chains" value="C=1-960"/>
</dbReference>
<dbReference type="PDB" id="1Z3H">
    <property type="method" value="X-ray"/>
    <property type="resolution" value="3.10 A"/>
    <property type="chains" value="A/B=1-960"/>
</dbReference>
<dbReference type="PDBsum" id="1WA5"/>
<dbReference type="PDBsum" id="1Z3H"/>
<dbReference type="SMR" id="P33307"/>
<dbReference type="BioGRID" id="33001">
    <property type="interactions" value="250"/>
</dbReference>
<dbReference type="DIP" id="DIP-1131N"/>
<dbReference type="FunCoup" id="P33307">
    <property type="interactions" value="1406"/>
</dbReference>
<dbReference type="IntAct" id="P33307">
    <property type="interactions" value="22"/>
</dbReference>
<dbReference type="MINT" id="P33307"/>
<dbReference type="STRING" id="4932.YGL238W"/>
<dbReference type="iPTMnet" id="P33307"/>
<dbReference type="PaxDb" id="4932-YGL238W"/>
<dbReference type="PeptideAtlas" id="P33307"/>
<dbReference type="EnsemblFungi" id="YGL238W_mRNA">
    <property type="protein sequence ID" value="YGL238W"/>
    <property type="gene ID" value="YGL238W"/>
</dbReference>
<dbReference type="GeneID" id="852612"/>
<dbReference type="KEGG" id="sce:YGL238W"/>
<dbReference type="AGR" id="SGD:S000003207"/>
<dbReference type="SGD" id="S000003207">
    <property type="gene designation" value="CSE1"/>
</dbReference>
<dbReference type="VEuPathDB" id="FungiDB:YGL238W"/>
<dbReference type="eggNOG" id="KOG1992">
    <property type="taxonomic scope" value="Eukaryota"/>
</dbReference>
<dbReference type="GeneTree" id="ENSGT00550000074884"/>
<dbReference type="HOGENOM" id="CLU_009614_0_0_1"/>
<dbReference type="InParanoid" id="P33307"/>
<dbReference type="OMA" id="AENEFLM"/>
<dbReference type="OrthoDB" id="3268246at2759"/>
<dbReference type="BioCyc" id="YEAST:G3O-30711-MONOMER"/>
<dbReference type="BioGRID-ORCS" id="852612">
    <property type="hits" value="3 hits in 10 CRISPR screens"/>
</dbReference>
<dbReference type="EvolutionaryTrace" id="P33307"/>
<dbReference type="PRO" id="PR:P33307"/>
<dbReference type="Proteomes" id="UP000002311">
    <property type="component" value="Chromosome VII"/>
</dbReference>
<dbReference type="RNAct" id="P33307">
    <property type="molecule type" value="protein"/>
</dbReference>
<dbReference type="GO" id="GO:0005829">
    <property type="term" value="C:cytosol"/>
    <property type="evidence" value="ECO:0000318"/>
    <property type="project" value="GO_Central"/>
</dbReference>
<dbReference type="GO" id="GO:0005635">
    <property type="term" value="C:nuclear envelope"/>
    <property type="evidence" value="ECO:0000314"/>
    <property type="project" value="SGD"/>
</dbReference>
<dbReference type="GO" id="GO:0032991">
    <property type="term" value="C:protein-containing complex"/>
    <property type="evidence" value="ECO:0000314"/>
    <property type="project" value="UniProtKB"/>
</dbReference>
<dbReference type="GO" id="GO:0005049">
    <property type="term" value="F:nuclear export signal receptor activity"/>
    <property type="evidence" value="ECO:0000316"/>
    <property type="project" value="SGD"/>
</dbReference>
<dbReference type="GO" id="GO:0031267">
    <property type="term" value="F:small GTPase binding"/>
    <property type="evidence" value="ECO:0007669"/>
    <property type="project" value="InterPro"/>
</dbReference>
<dbReference type="GO" id="GO:0051301">
    <property type="term" value="P:cell division"/>
    <property type="evidence" value="ECO:0007669"/>
    <property type="project" value="UniProtKB-KW"/>
</dbReference>
<dbReference type="GO" id="GO:0046827">
    <property type="term" value="P:positive regulation of protein export from nucleus"/>
    <property type="evidence" value="ECO:0000315"/>
    <property type="project" value="UniProtKB"/>
</dbReference>
<dbReference type="GO" id="GO:0006611">
    <property type="term" value="P:protein export from nucleus"/>
    <property type="evidence" value="ECO:0000316"/>
    <property type="project" value="SGD"/>
</dbReference>
<dbReference type="GO" id="GO:0006606">
    <property type="term" value="P:protein import into nucleus"/>
    <property type="evidence" value="ECO:0000318"/>
    <property type="project" value="GO_Central"/>
</dbReference>
<dbReference type="GO" id="GO:0061015">
    <property type="term" value="P:snRNA import into nucleus"/>
    <property type="evidence" value="ECO:0000315"/>
    <property type="project" value="SGD"/>
</dbReference>
<dbReference type="FunFam" id="1.25.10.10:FF:000057">
    <property type="entry name" value="Exportin-2 isoform 1"/>
    <property type="match status" value="1"/>
</dbReference>
<dbReference type="Gene3D" id="1.25.10.10">
    <property type="entry name" value="Leucine-rich Repeat Variant"/>
    <property type="match status" value="1"/>
</dbReference>
<dbReference type="IDEAL" id="IID50075"/>
<dbReference type="InterPro" id="IPR011989">
    <property type="entry name" value="ARM-like"/>
</dbReference>
<dbReference type="InterPro" id="IPR016024">
    <property type="entry name" value="ARM-type_fold"/>
</dbReference>
<dbReference type="InterPro" id="IPR001494">
    <property type="entry name" value="Importin-beta_N"/>
</dbReference>
<dbReference type="InterPro" id="IPR005043">
    <property type="entry name" value="XPO2_C"/>
</dbReference>
<dbReference type="InterPro" id="IPR013713">
    <property type="entry name" value="XPO2_central"/>
</dbReference>
<dbReference type="PANTHER" id="PTHR10997:SF8">
    <property type="entry name" value="EXPORTIN-2"/>
    <property type="match status" value="1"/>
</dbReference>
<dbReference type="PANTHER" id="PTHR10997">
    <property type="entry name" value="IMPORTIN-7, 8, 11"/>
    <property type="match status" value="1"/>
</dbReference>
<dbReference type="Pfam" id="PF03378">
    <property type="entry name" value="CAS_CSE1"/>
    <property type="match status" value="1"/>
</dbReference>
<dbReference type="Pfam" id="PF08506">
    <property type="entry name" value="Cse1"/>
    <property type="match status" value="1"/>
</dbReference>
<dbReference type="Pfam" id="PF03810">
    <property type="entry name" value="IBN_N"/>
    <property type="match status" value="1"/>
</dbReference>
<dbReference type="SMART" id="SM00913">
    <property type="entry name" value="IBN_N"/>
    <property type="match status" value="1"/>
</dbReference>
<dbReference type="SUPFAM" id="SSF48371">
    <property type="entry name" value="ARM repeat"/>
    <property type="match status" value="1"/>
</dbReference>
<dbReference type="PROSITE" id="PS50166">
    <property type="entry name" value="IMPORTIN_B_NT"/>
    <property type="match status" value="1"/>
</dbReference>
<proteinExistence type="evidence at protein level"/>
<accession>P33307</accession>
<accession>D6VV96</accession>
<reference key="1">
    <citation type="journal article" date="1993" name="Mol. Cell. Biol.">
        <title>CSE1 and CSE2, two new genes required for accurate mitotic chromosome segregation in Saccharomyces cerevisiae.</title>
        <authorList>
            <person name="Xiao Z."/>
            <person name="McGrew J.T."/>
            <person name="Schroeder A.J."/>
            <person name="Fitzgerald-Hayes M."/>
        </authorList>
    </citation>
    <scope>NUCLEOTIDE SEQUENCE [GENOMIC DNA]</scope>
</reference>
<reference key="2">
    <citation type="journal article" date="1997" name="Nature">
        <title>The nucleotide sequence of Saccharomyces cerevisiae chromosome VII.</title>
        <authorList>
            <person name="Tettelin H."/>
            <person name="Agostoni-Carbone M.L."/>
            <person name="Albermann K."/>
            <person name="Albers M."/>
            <person name="Arroyo J."/>
            <person name="Backes U."/>
            <person name="Barreiros T."/>
            <person name="Bertani I."/>
            <person name="Bjourson A.J."/>
            <person name="Brueckner M."/>
            <person name="Bruschi C.V."/>
            <person name="Carignani G."/>
            <person name="Castagnoli L."/>
            <person name="Cerdan E."/>
            <person name="Clemente M.L."/>
            <person name="Coblenz A."/>
            <person name="Coglievina M."/>
            <person name="Coissac E."/>
            <person name="Defoor E."/>
            <person name="Del Bino S."/>
            <person name="Delius H."/>
            <person name="Delneri D."/>
            <person name="de Wergifosse P."/>
            <person name="Dujon B."/>
            <person name="Durand P."/>
            <person name="Entian K.-D."/>
            <person name="Eraso P."/>
            <person name="Escribano V."/>
            <person name="Fabiani L."/>
            <person name="Fartmann B."/>
            <person name="Feroli F."/>
            <person name="Feuermann M."/>
            <person name="Frontali L."/>
            <person name="Garcia-Gonzalez M."/>
            <person name="Garcia-Saez M.I."/>
            <person name="Goffeau A."/>
            <person name="Guerreiro P."/>
            <person name="Hani J."/>
            <person name="Hansen M."/>
            <person name="Hebling U."/>
            <person name="Hernandez K."/>
            <person name="Heumann K."/>
            <person name="Hilger F."/>
            <person name="Hofmann B."/>
            <person name="Indge K.J."/>
            <person name="James C.M."/>
            <person name="Klima R."/>
            <person name="Koetter P."/>
            <person name="Kramer B."/>
            <person name="Kramer W."/>
            <person name="Lauquin G."/>
            <person name="Leuther H."/>
            <person name="Louis E.J."/>
            <person name="Maillier E."/>
            <person name="Marconi A."/>
            <person name="Martegani E."/>
            <person name="Mazon M.J."/>
            <person name="Mazzoni C."/>
            <person name="McReynolds A.D.K."/>
            <person name="Melchioretto P."/>
            <person name="Mewes H.-W."/>
            <person name="Minenkova O."/>
            <person name="Mueller-Auer S."/>
            <person name="Nawrocki A."/>
            <person name="Netter P."/>
            <person name="Neu R."/>
            <person name="Nombela C."/>
            <person name="Oliver S.G."/>
            <person name="Panzeri L."/>
            <person name="Paoluzi S."/>
            <person name="Plevani P."/>
            <person name="Portetelle D."/>
            <person name="Portillo F."/>
            <person name="Potier S."/>
            <person name="Purnelle B."/>
            <person name="Rieger M."/>
            <person name="Riles L."/>
            <person name="Rinaldi T."/>
            <person name="Robben J."/>
            <person name="Rodrigues-Pousada C."/>
            <person name="Rodriguez-Belmonte E."/>
            <person name="Rodriguez-Torres A.M."/>
            <person name="Rose M."/>
            <person name="Ruzzi M."/>
            <person name="Saliola M."/>
            <person name="Sanchez-Perez M."/>
            <person name="Schaefer B."/>
            <person name="Schaefer M."/>
            <person name="Scharfe M."/>
            <person name="Schmidheini T."/>
            <person name="Schreer A."/>
            <person name="Skala J."/>
            <person name="Souciet J.-L."/>
            <person name="Steensma H.Y."/>
            <person name="Talla E."/>
            <person name="Thierry A."/>
            <person name="Vandenbol M."/>
            <person name="van der Aart Q.J.M."/>
            <person name="Van Dyck L."/>
            <person name="Vanoni M."/>
            <person name="Verhasselt P."/>
            <person name="Voet M."/>
            <person name="Volckaert G."/>
            <person name="Wambutt R."/>
            <person name="Watson M.D."/>
            <person name="Weber N."/>
            <person name="Wedler E."/>
            <person name="Wedler H."/>
            <person name="Wipfli P."/>
            <person name="Wolf K."/>
            <person name="Wright L.F."/>
            <person name="Zaccaria P."/>
            <person name="Zimmermann M."/>
            <person name="Zollner A."/>
            <person name="Kleine K."/>
        </authorList>
    </citation>
    <scope>NUCLEOTIDE SEQUENCE [LARGE SCALE GENOMIC DNA]</scope>
    <source>
        <strain>ATCC 204508 / S288c</strain>
    </source>
</reference>
<reference key="3">
    <citation type="journal article" date="2014" name="G3 (Bethesda)">
        <title>The reference genome sequence of Saccharomyces cerevisiae: Then and now.</title>
        <authorList>
            <person name="Engel S.R."/>
            <person name="Dietrich F.S."/>
            <person name="Fisk D.G."/>
            <person name="Binkley G."/>
            <person name="Balakrishnan R."/>
            <person name="Costanzo M.C."/>
            <person name="Dwight S.S."/>
            <person name="Hitz B.C."/>
            <person name="Karra K."/>
            <person name="Nash R.S."/>
            <person name="Weng S."/>
            <person name="Wong E.D."/>
            <person name="Lloyd P."/>
            <person name="Skrzypek M.S."/>
            <person name="Miyasato S.R."/>
            <person name="Simison M."/>
            <person name="Cherry J.M."/>
        </authorList>
    </citation>
    <scope>GENOME REANNOTATION</scope>
    <source>
        <strain>ATCC 204508 / S288c</strain>
    </source>
</reference>
<reference key="4">
    <citation type="journal article" date="1995" name="Yeast">
        <title>The sequence of an 11.1 kb DNA fragment between ADH4 and ADE5 on the left arm of chromosome VII, reveals the presence of eight open reading frames.</title>
        <authorList>
            <person name="Vandenbol M."/>
            <person name="Durand P."/>
            <person name="Portetelle D."/>
            <person name="Hilger F."/>
        </authorList>
    </citation>
    <scope>NUCLEOTIDE SEQUENCE [GENOMIC DNA] OF 1-135</scope>
    <source>
        <strain>ATCC 204508 / S288c</strain>
    </source>
</reference>
<reference key="5">
    <citation type="journal article" date="1998" name="FEBS Lett.">
        <title>Cse1p functions as the nuclear export receptor for importin alpha in yeast.</title>
        <authorList>
            <person name="Kunzler M."/>
            <person name="Hurt E.C."/>
        </authorList>
    </citation>
    <scope>FUNCTION</scope>
</reference>
<reference key="6">
    <citation type="journal article" date="1998" name="J. Biol. Chem.">
        <title>Cse1p is required for export of Srp1p/importin-alpha from the nucleus in Saccharomyces cerevisiae.</title>
        <authorList>
            <person name="Hood J.K."/>
            <person name="Silver P.A."/>
        </authorList>
    </citation>
    <scope>FUNCTION</scope>
</reference>
<reference key="7">
    <citation type="journal article" date="1998" name="Mol. Cell. Biol.">
        <title>Cse1p is involved in export of yeast importin alpha from the nucleus.</title>
        <authorList>
            <person name="Solsbacher J."/>
            <person name="Maurer P."/>
            <person name="Bischoff F.R."/>
            <person name="Schlenstedt G."/>
        </authorList>
    </citation>
    <scope>FUNCTION</scope>
</reference>
<reference key="8">
    <citation type="journal article" date="1999" name="Mol. Gen. Genet.">
        <title>Genetic evidence for interactions between yeast importin alpha (Srp1p) and its nuclear export receptor, Cse1p.</title>
        <authorList>
            <person name="Schroeder A.J."/>
            <person name="Chen X.H."/>
            <person name="Xiao Z."/>
            <person name="Fitzgerald-Hayes M."/>
        </authorList>
    </citation>
    <scope>FUNCTION</scope>
</reference>
<reference key="9">
    <citation type="journal article" date="2003" name="Nature">
        <title>Global analysis of protein expression in yeast.</title>
        <authorList>
            <person name="Ghaemmaghami S."/>
            <person name="Huh W.-K."/>
            <person name="Bower K."/>
            <person name="Howson R.W."/>
            <person name="Belle A."/>
            <person name="Dephoure N."/>
            <person name="O'Shea E.K."/>
            <person name="Weissman J.S."/>
        </authorList>
    </citation>
    <scope>LEVEL OF PROTEIN EXPRESSION [LARGE SCALE ANALYSIS]</scope>
</reference>
<reference key="10">
    <citation type="journal article" date="2004" name="Nature">
        <title>Structural basis for the assembly of a nuclear export complex.</title>
        <authorList>
            <person name="Matsuura Y."/>
            <person name="Stewart M."/>
        </authorList>
    </citation>
    <scope>X-RAY CRYSTALLOGRAPHY (2.0 ANGSTROMS) IN COMPLEX WITH SRP1 CARGO AND DOG RANGTP</scope>
</reference>